<sequence length="375" mass="42366">MSSHKGSAGAQGNGAPSGNREADTVELAELGPLLEEKGKRAASSPAKAEEDQACPVPQEEEEEVRVLTLPLQAHHAMEKMEEFVYKVWEGRWRVIPYDVLPDWLKDNDYLLHGHRPPMPSFRACFKSIFRIHTETGNIWTHLLGFVLFLFLGILTMLRPNMYFMAPLQEKVVFGMFFLGAVLCLSFSWLFHTVYCHSEKVSRTFSKLDYSGIALLIMGSFVPWLYYSFYCSPQPRLIYLSIVCVLGISAIIVAQWDRFATPKHRQTRAGVFLGLGLSGVVPTMHFTIAEGFVKATTVGQMGWFFLMAVMYITGAGLYAARIPERFFPGKFDIWFQSHQIFHVLVVAAAFVHFYGVSNLQEFRYGLEGGCTDDSLL</sequence>
<reference key="1">
    <citation type="journal article" date="2005" name="Science">
        <title>The transcriptional landscape of the mammalian genome.</title>
        <authorList>
            <person name="Carninci P."/>
            <person name="Kasukawa T."/>
            <person name="Katayama S."/>
            <person name="Gough J."/>
            <person name="Frith M.C."/>
            <person name="Maeda N."/>
            <person name="Oyama R."/>
            <person name="Ravasi T."/>
            <person name="Lenhard B."/>
            <person name="Wells C."/>
            <person name="Kodzius R."/>
            <person name="Shimokawa K."/>
            <person name="Bajic V.B."/>
            <person name="Brenner S.E."/>
            <person name="Batalov S."/>
            <person name="Forrest A.R."/>
            <person name="Zavolan M."/>
            <person name="Davis M.J."/>
            <person name="Wilming L.G."/>
            <person name="Aidinis V."/>
            <person name="Allen J.E."/>
            <person name="Ambesi-Impiombato A."/>
            <person name="Apweiler R."/>
            <person name="Aturaliya R.N."/>
            <person name="Bailey T.L."/>
            <person name="Bansal M."/>
            <person name="Baxter L."/>
            <person name="Beisel K.W."/>
            <person name="Bersano T."/>
            <person name="Bono H."/>
            <person name="Chalk A.M."/>
            <person name="Chiu K.P."/>
            <person name="Choudhary V."/>
            <person name="Christoffels A."/>
            <person name="Clutterbuck D.R."/>
            <person name="Crowe M.L."/>
            <person name="Dalla E."/>
            <person name="Dalrymple B.P."/>
            <person name="de Bono B."/>
            <person name="Della Gatta G."/>
            <person name="di Bernardo D."/>
            <person name="Down T."/>
            <person name="Engstrom P."/>
            <person name="Fagiolini M."/>
            <person name="Faulkner G."/>
            <person name="Fletcher C.F."/>
            <person name="Fukushima T."/>
            <person name="Furuno M."/>
            <person name="Futaki S."/>
            <person name="Gariboldi M."/>
            <person name="Georgii-Hemming P."/>
            <person name="Gingeras T.R."/>
            <person name="Gojobori T."/>
            <person name="Green R.E."/>
            <person name="Gustincich S."/>
            <person name="Harbers M."/>
            <person name="Hayashi Y."/>
            <person name="Hensch T.K."/>
            <person name="Hirokawa N."/>
            <person name="Hill D."/>
            <person name="Huminiecki L."/>
            <person name="Iacono M."/>
            <person name="Ikeo K."/>
            <person name="Iwama A."/>
            <person name="Ishikawa T."/>
            <person name="Jakt M."/>
            <person name="Kanapin A."/>
            <person name="Katoh M."/>
            <person name="Kawasawa Y."/>
            <person name="Kelso J."/>
            <person name="Kitamura H."/>
            <person name="Kitano H."/>
            <person name="Kollias G."/>
            <person name="Krishnan S.P."/>
            <person name="Kruger A."/>
            <person name="Kummerfeld S.K."/>
            <person name="Kurochkin I.V."/>
            <person name="Lareau L.F."/>
            <person name="Lazarevic D."/>
            <person name="Lipovich L."/>
            <person name="Liu J."/>
            <person name="Liuni S."/>
            <person name="McWilliam S."/>
            <person name="Madan Babu M."/>
            <person name="Madera M."/>
            <person name="Marchionni L."/>
            <person name="Matsuda H."/>
            <person name="Matsuzawa S."/>
            <person name="Miki H."/>
            <person name="Mignone F."/>
            <person name="Miyake S."/>
            <person name="Morris K."/>
            <person name="Mottagui-Tabar S."/>
            <person name="Mulder N."/>
            <person name="Nakano N."/>
            <person name="Nakauchi H."/>
            <person name="Ng P."/>
            <person name="Nilsson R."/>
            <person name="Nishiguchi S."/>
            <person name="Nishikawa S."/>
            <person name="Nori F."/>
            <person name="Ohara O."/>
            <person name="Okazaki Y."/>
            <person name="Orlando V."/>
            <person name="Pang K.C."/>
            <person name="Pavan W.J."/>
            <person name="Pavesi G."/>
            <person name="Pesole G."/>
            <person name="Petrovsky N."/>
            <person name="Piazza S."/>
            <person name="Reed J."/>
            <person name="Reid J.F."/>
            <person name="Ring B.Z."/>
            <person name="Ringwald M."/>
            <person name="Rost B."/>
            <person name="Ruan Y."/>
            <person name="Salzberg S.L."/>
            <person name="Sandelin A."/>
            <person name="Schneider C."/>
            <person name="Schoenbach C."/>
            <person name="Sekiguchi K."/>
            <person name="Semple C.A."/>
            <person name="Seno S."/>
            <person name="Sessa L."/>
            <person name="Sheng Y."/>
            <person name="Shibata Y."/>
            <person name="Shimada H."/>
            <person name="Shimada K."/>
            <person name="Silva D."/>
            <person name="Sinclair B."/>
            <person name="Sperling S."/>
            <person name="Stupka E."/>
            <person name="Sugiura K."/>
            <person name="Sultana R."/>
            <person name="Takenaka Y."/>
            <person name="Taki K."/>
            <person name="Tammoja K."/>
            <person name="Tan S.L."/>
            <person name="Tang S."/>
            <person name="Taylor M.S."/>
            <person name="Tegner J."/>
            <person name="Teichmann S.A."/>
            <person name="Ueda H.R."/>
            <person name="van Nimwegen E."/>
            <person name="Verardo R."/>
            <person name="Wei C.L."/>
            <person name="Yagi K."/>
            <person name="Yamanishi H."/>
            <person name="Zabarovsky E."/>
            <person name="Zhu S."/>
            <person name="Zimmer A."/>
            <person name="Hide W."/>
            <person name="Bult C."/>
            <person name="Grimmond S.M."/>
            <person name="Teasdale R.D."/>
            <person name="Liu E.T."/>
            <person name="Brusic V."/>
            <person name="Quackenbush J."/>
            <person name="Wahlestedt C."/>
            <person name="Mattick J.S."/>
            <person name="Hume D.A."/>
            <person name="Kai C."/>
            <person name="Sasaki D."/>
            <person name="Tomaru Y."/>
            <person name="Fukuda S."/>
            <person name="Kanamori-Katayama M."/>
            <person name="Suzuki M."/>
            <person name="Aoki J."/>
            <person name="Arakawa T."/>
            <person name="Iida J."/>
            <person name="Imamura K."/>
            <person name="Itoh M."/>
            <person name="Kato T."/>
            <person name="Kawaji H."/>
            <person name="Kawagashira N."/>
            <person name="Kawashima T."/>
            <person name="Kojima M."/>
            <person name="Kondo S."/>
            <person name="Konno H."/>
            <person name="Nakano K."/>
            <person name="Ninomiya N."/>
            <person name="Nishio T."/>
            <person name="Okada M."/>
            <person name="Plessy C."/>
            <person name="Shibata K."/>
            <person name="Shiraki T."/>
            <person name="Suzuki S."/>
            <person name="Tagami M."/>
            <person name="Waki K."/>
            <person name="Watahiki A."/>
            <person name="Okamura-Oho Y."/>
            <person name="Suzuki H."/>
            <person name="Kawai J."/>
            <person name="Hayashizaki Y."/>
        </authorList>
    </citation>
    <scope>NUCLEOTIDE SEQUENCE [LARGE SCALE MRNA]</scope>
    <source>
        <strain>C57BL/6J</strain>
        <tissue>Embryo</tissue>
    </source>
</reference>
<reference key="2">
    <citation type="journal article" date="2004" name="Genome Res.">
        <title>The status, quality, and expansion of the NIH full-length cDNA project: the Mammalian Gene Collection (MGC).</title>
        <authorList>
            <consortium name="The MGC Project Team"/>
        </authorList>
    </citation>
    <scope>NUCLEOTIDE SEQUENCE [LARGE SCALE MRNA]</scope>
    <source>
        <tissue>Mammary tumor</tissue>
    </source>
</reference>
<reference key="3">
    <citation type="journal article" date="2003" name="Nature">
        <title>Cloning of adiponectin receptors that mediate antidiabetic metabolic effects.</title>
        <authorList>
            <person name="Yamauchi T."/>
            <person name="Kamon J."/>
            <person name="Ito Y."/>
            <person name="Tsuchida A."/>
            <person name="Yokomizo T."/>
            <person name="Kita S."/>
            <person name="Sugiyama T."/>
            <person name="Miyagishi M."/>
            <person name="Hara K."/>
            <person name="Tsunoda M."/>
            <person name="Murakami K."/>
            <person name="Ohteki T."/>
            <person name="Uchida S."/>
            <person name="Takekawa S."/>
            <person name="Waki H."/>
            <person name="Tsuno N.H."/>
            <person name="Shibata Y."/>
            <person name="Terauchi Y."/>
            <person name="Froguel P."/>
            <person name="Tobe K."/>
            <person name="Koyasu S."/>
            <person name="Taira K."/>
            <person name="Kitamura T."/>
            <person name="Shimizu T."/>
            <person name="Nagai R."/>
            <person name="Kadowaki T."/>
        </authorList>
    </citation>
    <scope>FUNCTION</scope>
    <scope>TISSUE SPECIFICITY</scope>
</reference>
<reference key="4">
    <citation type="journal article" date="2007" name="Diabetes">
        <title>Opposing effects of adiponectin receptors 1 and 2 on energy metabolism.</title>
        <authorList>
            <person name="Bjursell M."/>
            <person name="Ahnmark A."/>
            <person name="Bohlooly-Y M."/>
            <person name="William-Olsson L."/>
            <person name="Rhedin M."/>
            <person name="Peng X.R."/>
            <person name="Ploj K."/>
            <person name="Gerdin A.K."/>
            <person name="Arnerup G."/>
            <person name="Elmgren A."/>
            <person name="Berg A.L."/>
            <person name="Oscarsson J."/>
            <person name="Linden D."/>
        </authorList>
    </citation>
    <scope>DISRUPTION PHENOTYPE</scope>
    <scope>FUNCTION</scope>
    <scope>TISSUE SPECIFICITY</scope>
</reference>
<reference key="5">
    <citation type="journal article" date="2007" name="Nat. Med.">
        <title>Targeted disruption of AdipoR1 and AdipoR2 causes abrogation of adiponectin binding and metabolic actions.</title>
        <authorList>
            <person name="Yamauchi T."/>
            <person name="Nio Y."/>
            <person name="Maki T."/>
            <person name="Kobayashi M."/>
            <person name="Takazawa T."/>
            <person name="Iwabu M."/>
            <person name="Okada-Iwabu M."/>
            <person name="Kawamoto S."/>
            <person name="Kubota N."/>
            <person name="Kubota T."/>
            <person name="Ito Y."/>
            <person name="Kamon J."/>
            <person name="Tsuchida A."/>
            <person name="Kumagai K."/>
            <person name="Kozono H."/>
            <person name="Hada Y."/>
            <person name="Ogata H."/>
            <person name="Tokuyama K."/>
            <person name="Tsunoda M."/>
            <person name="Ide T."/>
            <person name="Murakami K."/>
            <person name="Awazawa M."/>
            <person name="Takamoto I."/>
            <person name="Froguel P."/>
            <person name="Hara K."/>
            <person name="Tobe K."/>
            <person name="Nagai R."/>
            <person name="Ueki K."/>
            <person name="Kadowaki T."/>
        </authorList>
    </citation>
    <scope>DISRUPTION PHENOTYPE</scope>
    <scope>FUNCTION</scope>
    <scope>SUBCELLULAR LOCATION</scope>
    <scope>TISSUE SPECIFICITY</scope>
</reference>
<reference key="6">
    <citation type="journal article" date="2009" name="J. Biol. Chem.">
        <title>Yin-Yang regulation of adiponectin signaling by APPL isoforms in muscle cells.</title>
        <authorList>
            <person name="Wang C."/>
            <person name="Xin X."/>
            <person name="Xiang R."/>
            <person name="Ramos F.J."/>
            <person name="Liu M."/>
            <person name="Lee H.J."/>
            <person name="Chen H."/>
            <person name="Mao X."/>
            <person name="Kikani C.K."/>
            <person name="Liu F."/>
            <person name="Dong L.Q."/>
        </authorList>
    </citation>
    <scope>INTERACTION WITH APPL2 AND APPL1</scope>
</reference>
<reference key="7">
    <citation type="journal article" date="2014" name="J. Biol. Chem.">
        <title>Divergent roles for adiponectin receptor 1 (AdipoR1) and AdipoR2 in mediating revascularization and metabolic dysfunction in vivo.</title>
        <authorList>
            <person name="Parker-Duffen J.L."/>
            <person name="Nakamura K."/>
            <person name="Silver M."/>
            <person name="Zuriaga M.A."/>
            <person name="MacLauchlan S."/>
            <person name="Aprahamian T.R."/>
            <person name="Walsh K."/>
        </authorList>
    </citation>
    <scope>DISRUPTION PHENOTYPE</scope>
    <scope>FUNCTION</scope>
    <scope>TISSUE SPECIFICITY</scope>
</reference>
<feature type="chain" id="PRO_0000218828" description="Adiponectin receptor protein 1">
    <location>
        <begin position="1"/>
        <end position="375"/>
    </location>
</feature>
<feature type="topological domain" description="Cytoplasmic" evidence="2">
    <location>
        <begin position="1"/>
        <end position="136"/>
    </location>
</feature>
<feature type="transmembrane region" description="Helical; Name=1" evidence="2">
    <location>
        <begin position="137"/>
        <end position="157"/>
    </location>
</feature>
<feature type="topological domain" description="Extracellular" evidence="2">
    <location>
        <begin position="158"/>
        <end position="170"/>
    </location>
</feature>
<feature type="transmembrane region" description="Helical; Name=2" evidence="2">
    <location>
        <begin position="171"/>
        <end position="191"/>
    </location>
</feature>
<feature type="topological domain" description="Cytoplasmic" evidence="2">
    <location>
        <begin position="192"/>
        <end position="203"/>
    </location>
</feature>
<feature type="transmembrane region" description="Helical; Name=3" evidence="2">
    <location>
        <begin position="204"/>
        <end position="224"/>
    </location>
</feature>
<feature type="topological domain" description="Extracellular" evidence="2">
    <location>
        <begin position="225"/>
        <end position="234"/>
    </location>
</feature>
<feature type="transmembrane region" description="Helical; Name=4" evidence="2">
    <location>
        <begin position="235"/>
        <end position="255"/>
    </location>
</feature>
<feature type="topological domain" description="Cytoplasmic" evidence="2">
    <location>
        <begin position="256"/>
        <end position="264"/>
    </location>
</feature>
<feature type="transmembrane region" description="Helical; Name=5" evidence="2">
    <location>
        <begin position="265"/>
        <end position="285"/>
    </location>
</feature>
<feature type="topological domain" description="Extracellular" evidence="2">
    <location>
        <begin position="286"/>
        <end position="298"/>
    </location>
</feature>
<feature type="transmembrane region" description="Helical; Name=6" evidence="2">
    <location>
        <begin position="299"/>
        <end position="319"/>
    </location>
</feature>
<feature type="topological domain" description="Cytoplasmic" evidence="2">
    <location>
        <begin position="320"/>
        <end position="337"/>
    </location>
</feature>
<feature type="transmembrane region" description="Helical; Name=7" evidence="2">
    <location>
        <begin position="338"/>
        <end position="358"/>
    </location>
</feature>
<feature type="topological domain" description="Extracellular" evidence="2">
    <location>
        <begin position="359"/>
        <end position="375"/>
    </location>
</feature>
<feature type="region of interest" description="Disordered" evidence="3">
    <location>
        <begin position="1"/>
        <end position="60"/>
    </location>
</feature>
<feature type="binding site" evidence="2">
    <location>
        <position position="191"/>
    </location>
    <ligand>
        <name>Zn(2+)</name>
        <dbReference type="ChEBI" id="CHEBI:29105"/>
    </ligand>
</feature>
<feature type="binding site" evidence="2">
    <location>
        <position position="337"/>
    </location>
    <ligand>
        <name>Zn(2+)</name>
        <dbReference type="ChEBI" id="CHEBI:29105"/>
    </ligand>
</feature>
<feature type="binding site" evidence="2">
    <location>
        <position position="341"/>
    </location>
    <ligand>
        <name>Zn(2+)</name>
        <dbReference type="ChEBI" id="CHEBI:29105"/>
    </ligand>
</feature>
<accession>Q91VH1</accession>
<accession>Q9CZA0</accession>
<gene>
    <name evidence="11" type="primary">Adipor1</name>
    <name evidence="1 2" type="synonym">Parq1</name>
</gene>
<evidence type="ECO:0000250" key="1">
    <source>
        <dbReference type="UniProtKB" id="Q86V24"/>
    </source>
</evidence>
<evidence type="ECO:0000250" key="2">
    <source>
        <dbReference type="UniProtKB" id="Q96A54"/>
    </source>
</evidence>
<evidence type="ECO:0000256" key="3">
    <source>
        <dbReference type="SAM" id="MobiDB-lite"/>
    </source>
</evidence>
<evidence type="ECO:0000269" key="4">
    <source>
    </source>
</evidence>
<evidence type="ECO:0000269" key="5">
    <source>
    </source>
</evidence>
<evidence type="ECO:0000269" key="6">
    <source>
    </source>
</evidence>
<evidence type="ECO:0000269" key="7">
    <source>
    </source>
</evidence>
<evidence type="ECO:0000269" key="8">
    <source>
    </source>
</evidence>
<evidence type="ECO:0000303" key="9">
    <source>
    </source>
</evidence>
<evidence type="ECO:0000305" key="10"/>
<evidence type="ECO:0000312" key="11">
    <source>
        <dbReference type="MGI" id="MGI:1919924"/>
    </source>
</evidence>
<organism>
    <name type="scientific">Mus musculus</name>
    <name type="common">Mouse</name>
    <dbReference type="NCBI Taxonomy" id="10090"/>
    <lineage>
        <taxon>Eukaryota</taxon>
        <taxon>Metazoa</taxon>
        <taxon>Chordata</taxon>
        <taxon>Craniata</taxon>
        <taxon>Vertebrata</taxon>
        <taxon>Euteleostomi</taxon>
        <taxon>Mammalia</taxon>
        <taxon>Eutheria</taxon>
        <taxon>Euarchontoglires</taxon>
        <taxon>Glires</taxon>
        <taxon>Rodentia</taxon>
        <taxon>Myomorpha</taxon>
        <taxon>Muroidea</taxon>
        <taxon>Muridae</taxon>
        <taxon>Murinae</taxon>
        <taxon>Mus</taxon>
        <taxon>Mus</taxon>
    </lineage>
</organism>
<protein>
    <recommendedName>
        <fullName evidence="9">Adiponectin receptor protein 1</fullName>
    </recommendedName>
    <alternativeName>
        <fullName evidence="2">Progestin and adipoQ receptor family member 1</fullName>
    </alternativeName>
    <alternativeName>
        <fullName>Progestin and adipoQ receptor family member I</fullName>
    </alternativeName>
</protein>
<keyword id="KW-1003">Cell membrane</keyword>
<keyword id="KW-0276">Fatty acid metabolism</keyword>
<keyword id="KW-0443">Lipid metabolism</keyword>
<keyword id="KW-0472">Membrane</keyword>
<keyword id="KW-0479">Metal-binding</keyword>
<keyword id="KW-0675">Receptor</keyword>
<keyword id="KW-1185">Reference proteome</keyword>
<keyword id="KW-0812">Transmembrane</keyword>
<keyword id="KW-1133">Transmembrane helix</keyword>
<keyword id="KW-0862">Zinc</keyword>
<comment type="function">
    <text evidence="4 5 6 8">Receptor for ADIPOQ, an essential hormone secreted by adipocytes that regulates glucose and lipid metabolism (PubMed:17268472, PubMed:17327425, PubMed:24742672). Required for normal glucose and fat homeostasis and for maintaining a normal body weight (PubMed:17327425, PubMed:24742672). ADIPOQ-binding activates a signaling cascade that leads to increased AMPK activity, and ultimately to increased fatty acid oxidation, increased glucose uptake and decreased gluconeogenesis (PubMed:12802337, PubMed:17268472, PubMed:17327425, PubMed:24742672). Has high affinity for globular adiponectin and low affinity for full-length adiponectin (PubMed:12802337).</text>
</comment>
<comment type="subunit">
    <text evidence="2 7">May form homooligomers and heterooligomers with ADIPOR2 (By similarity). Interacts with APPL2 (via BAR domain); hinders the accessibility of APPL1 to ADIPOR1; negatively regulates adiponectin signaling; ADIPOQ dissociates this interaction and facilitates the recruitment of APPL1 to ADIPOR1 (PubMed:19661063). Interacts with APPL1; ADIPOQ enhances this interaction; inhibites adiponectin-stimulated binding of APPL2 to ADIPOR1 (PubMed:19661063).</text>
</comment>
<comment type="interaction">
    <interactant intactId="EBI-992398">
        <id>Q91VH1</id>
    </interactant>
    <interactant intactId="EBI-741243">
        <id>Q9UKG1</id>
        <label>APPL1</label>
    </interactant>
    <organismsDiffer>true</organismsDiffer>
    <experiments>3</experiments>
</comment>
<comment type="subcellular location">
    <subcellularLocation>
        <location evidence="5">Cell membrane</location>
        <topology evidence="2">Multi-pass membrane protein</topology>
    </subcellularLocation>
    <text evidence="2">Localized to the cell membrane and intracellular organelles.</text>
</comment>
<comment type="tissue specificity">
    <text evidence="4 5 6 8">Detected in brain and quadriceps muscle (at protein level) (PubMed:17327425). Widely expressed (PubMed:12802337). Expressed in heart, kidney, liver, lung, skeletal muscle, white adipose tissue, brown adipose tissue, aorta and spleen (PubMed:12802337, PubMed:24742672). Weakly expressed in brain and testis (PubMed:12802337).</text>
</comment>
<comment type="domain">
    <text evidence="2">The N-terminus is cytoplasmic and the C-terminus is extracellular, contrary to what is observed for G-protein coupled receptors. Unlike G-protein coupled receptors, transmembrane helices are not kinked or tilted relative to the plane of the membrane.</text>
</comment>
<comment type="disruption phenotype">
    <text evidence="5 6 8">Mutant mice are viable and fertile, but display defects in glucose and lipid homeostasis. The precise phenotype may depend on experimental details and genetic background. Mutant mice have normal body weight, but increased plasma glucose and insulin levels (PubMed:17268472). Mutant male mice, but not female mice, display increased body weight gain on standard chow, in spite of similar food intake as wild-type (PubMed:17327425). Mutant mice display increased body weight, both on standard chow and on high fat and high sucrose diet (PubMed:24742672). Male mice have increased total body fat mass after 15 weeks, and have increased weights of both white and brown adipose tissue (PubMed:17327425, PubMed:24742672). Mutant mice have impaired glucose tolerance (PubMed:24742672). Male mice have decreased glucose tolerance, but no significant change in the insulin response (PubMed:17327425). Female mice display increased fasting glucose levels, but unchanged fasting insulin levels (PubMed:17327425). Male and female mice display increased levels of liver triglycerides relative to wild-type (PubMed:17327425, PubMed:24742672). Male mice display decreased locomotor activity and decreased energy expenditure relative to wild-type (PubMed:17327425). Mutant mice display normal revascularization after chronic limb ischemia caused by severing of blood vessels (PubMed:24742672). Hepatocytes from mice lacking both Adipor1 and Adipor2 show loss of adiponectin binding and lack of adiponectin-mediated activation of AMPK and Ppara (PubMed:17268472). Mice lacking both Adipor1 and Adipor2 display elevated glucose and insulin levels in blood plasma, indicative of glucose intolerance and insulin resistance (PubMed:17268472).</text>
</comment>
<comment type="similarity">
    <text evidence="10">Belongs to the ADIPOR family.</text>
</comment>
<comment type="sequence caution" evidence="10">
    <conflict type="erroneous termination">
        <sequence resource="EMBL-CDS" id="BAB28509"/>
    </conflict>
    <text>Truncated C-terminus.</text>
</comment>
<comment type="sequence caution" evidence="10">
    <conflict type="frameshift">
        <sequence resource="EMBL-CDS" id="BAB28509"/>
    </conflict>
    <text>This frameshift abolishes the stop codon.</text>
</comment>
<proteinExistence type="evidence at protein level"/>
<name>PAQR1_MOUSE</name>
<dbReference type="EMBL" id="AK012847">
    <property type="protein sequence ID" value="BAB28509.1"/>
    <property type="status" value="ALT_SEQ"/>
    <property type="molecule type" value="mRNA"/>
</dbReference>
<dbReference type="EMBL" id="BC014875">
    <property type="protein sequence ID" value="AAH14875.1"/>
    <property type="molecule type" value="mRNA"/>
</dbReference>
<dbReference type="CCDS" id="CCDS15309.1"/>
<dbReference type="RefSeq" id="NP_001292998.1">
    <property type="nucleotide sequence ID" value="NM_001306069.1"/>
</dbReference>
<dbReference type="RefSeq" id="NP_082596.2">
    <property type="nucleotide sequence ID" value="NM_028320.4"/>
</dbReference>
<dbReference type="SMR" id="Q91VH1"/>
<dbReference type="BioGRID" id="215509">
    <property type="interactions" value="1"/>
</dbReference>
<dbReference type="FunCoup" id="Q91VH1">
    <property type="interactions" value="875"/>
</dbReference>
<dbReference type="IntAct" id="Q91VH1">
    <property type="interactions" value="2"/>
</dbReference>
<dbReference type="STRING" id="10090.ENSMUSP00000107856"/>
<dbReference type="iPTMnet" id="Q91VH1"/>
<dbReference type="PhosphoSitePlus" id="Q91VH1"/>
<dbReference type="PaxDb" id="10090-ENSMUSP00000107856"/>
<dbReference type="ProteomicsDB" id="287884"/>
<dbReference type="Antibodypedia" id="34534">
    <property type="antibodies" value="411 antibodies from 37 providers"/>
</dbReference>
<dbReference type="Ensembl" id="ENSMUST00000027727.15">
    <property type="protein sequence ID" value="ENSMUSP00000027727.9"/>
    <property type="gene ID" value="ENSMUSG00000026457.15"/>
</dbReference>
<dbReference type="Ensembl" id="ENSMUST00000112237.2">
    <property type="protein sequence ID" value="ENSMUSP00000107856.2"/>
    <property type="gene ID" value="ENSMUSG00000026457.15"/>
</dbReference>
<dbReference type="GeneID" id="72674"/>
<dbReference type="KEGG" id="mmu:72674"/>
<dbReference type="UCSC" id="uc007crx.1">
    <property type="organism name" value="mouse"/>
</dbReference>
<dbReference type="AGR" id="MGI:1919924"/>
<dbReference type="CTD" id="51094"/>
<dbReference type="MGI" id="MGI:1919924">
    <property type="gene designation" value="Adipor1"/>
</dbReference>
<dbReference type="VEuPathDB" id="HostDB:ENSMUSG00000026457"/>
<dbReference type="eggNOG" id="KOG0748">
    <property type="taxonomic scope" value="Eukaryota"/>
</dbReference>
<dbReference type="GeneTree" id="ENSGT00940000154563"/>
<dbReference type="HOGENOM" id="CLU_023075_1_0_1"/>
<dbReference type="InParanoid" id="Q91VH1"/>
<dbReference type="OMA" id="IGNACDY"/>
<dbReference type="OrthoDB" id="5585746at2759"/>
<dbReference type="PhylomeDB" id="Q91VH1"/>
<dbReference type="TreeFam" id="TF313640"/>
<dbReference type="Reactome" id="R-MMU-163680">
    <property type="pathway name" value="AMPK inhibits chREBP transcriptional activation activity"/>
</dbReference>
<dbReference type="BioGRID-ORCS" id="72674">
    <property type="hits" value="7 hits in 78 CRISPR screens"/>
</dbReference>
<dbReference type="ChiTaRS" id="Adipor1">
    <property type="organism name" value="mouse"/>
</dbReference>
<dbReference type="PRO" id="PR:Q91VH1"/>
<dbReference type="Proteomes" id="UP000000589">
    <property type="component" value="Chromosome 1"/>
</dbReference>
<dbReference type="RNAct" id="Q91VH1">
    <property type="molecule type" value="protein"/>
</dbReference>
<dbReference type="Bgee" id="ENSMUSG00000026457">
    <property type="expression patterns" value="Expressed in blood and 269 other cell types or tissues"/>
</dbReference>
<dbReference type="ExpressionAtlas" id="Q91VH1">
    <property type="expression patterns" value="baseline and differential"/>
</dbReference>
<dbReference type="GO" id="GO:0005886">
    <property type="term" value="C:plasma membrane"/>
    <property type="evidence" value="ECO:0000314"/>
    <property type="project" value="MGI"/>
</dbReference>
<dbReference type="GO" id="GO:0097003">
    <property type="term" value="F:adipokinetic hormone receptor activity"/>
    <property type="evidence" value="ECO:0000250"/>
    <property type="project" value="UniProtKB"/>
</dbReference>
<dbReference type="GO" id="GO:0055100">
    <property type="term" value="F:adiponectin binding"/>
    <property type="evidence" value="ECO:0000353"/>
    <property type="project" value="MGI"/>
</dbReference>
<dbReference type="GO" id="GO:0042802">
    <property type="term" value="F:identical protein binding"/>
    <property type="evidence" value="ECO:0000314"/>
    <property type="project" value="MGI"/>
</dbReference>
<dbReference type="GO" id="GO:0046872">
    <property type="term" value="F:metal ion binding"/>
    <property type="evidence" value="ECO:0007669"/>
    <property type="project" value="UniProtKB-KW"/>
</dbReference>
<dbReference type="GO" id="GO:0019901">
    <property type="term" value="F:protein kinase binding"/>
    <property type="evidence" value="ECO:0007669"/>
    <property type="project" value="Ensembl"/>
</dbReference>
<dbReference type="GO" id="GO:0038023">
    <property type="term" value="F:signaling receptor activity"/>
    <property type="evidence" value="ECO:0000314"/>
    <property type="project" value="MGI"/>
</dbReference>
<dbReference type="GO" id="GO:0033211">
    <property type="term" value="P:adiponectin-activated signaling pathway"/>
    <property type="evidence" value="ECO:0000314"/>
    <property type="project" value="MGI"/>
</dbReference>
<dbReference type="GO" id="GO:0019395">
    <property type="term" value="P:fatty acid oxidation"/>
    <property type="evidence" value="ECO:0000250"/>
    <property type="project" value="UniProtKB"/>
</dbReference>
<dbReference type="GO" id="GO:0042593">
    <property type="term" value="P:glucose homeostasis"/>
    <property type="evidence" value="ECO:0000315"/>
    <property type="project" value="UniProtKB"/>
</dbReference>
<dbReference type="GO" id="GO:0009755">
    <property type="term" value="P:hormone-mediated signaling pathway"/>
    <property type="evidence" value="ECO:0000250"/>
    <property type="project" value="UniProtKB"/>
</dbReference>
<dbReference type="GO" id="GO:0033210">
    <property type="term" value="P:leptin-mediated signaling pathway"/>
    <property type="evidence" value="ECO:0007669"/>
    <property type="project" value="Ensembl"/>
</dbReference>
<dbReference type="GO" id="GO:0030308">
    <property type="term" value="P:negative regulation of cell growth"/>
    <property type="evidence" value="ECO:0007669"/>
    <property type="project" value="Ensembl"/>
</dbReference>
<dbReference type="GO" id="GO:0010633">
    <property type="term" value="P:negative regulation of epithelial cell migration"/>
    <property type="evidence" value="ECO:0007669"/>
    <property type="project" value="Ensembl"/>
</dbReference>
<dbReference type="GO" id="GO:0010719">
    <property type="term" value="P:negative regulation of epithelial to mesenchymal transition"/>
    <property type="evidence" value="ECO:0007669"/>
    <property type="project" value="Ensembl"/>
</dbReference>
<dbReference type="GO" id="GO:1901223">
    <property type="term" value="P:negative regulation of non-canonical NF-kappaB signal transduction"/>
    <property type="evidence" value="ECO:0007669"/>
    <property type="project" value="Ensembl"/>
</dbReference>
<dbReference type="GO" id="GO:0046426">
    <property type="term" value="P:negative regulation of receptor signaling pathway via JAK-STAT"/>
    <property type="evidence" value="ECO:0007669"/>
    <property type="project" value="Ensembl"/>
</dbReference>
<dbReference type="GO" id="GO:0120162">
    <property type="term" value="P:positive regulation of cold-induced thermogenesis"/>
    <property type="evidence" value="ECO:0000315"/>
    <property type="project" value="YuBioLab"/>
</dbReference>
<dbReference type="GO" id="GO:0046628">
    <property type="term" value="P:positive regulation of insulin receptor signaling pathway"/>
    <property type="evidence" value="ECO:0007669"/>
    <property type="project" value="Ensembl"/>
</dbReference>
<dbReference type="GO" id="GO:0046427">
    <property type="term" value="P:positive regulation of receptor signaling pathway via JAK-STAT"/>
    <property type="evidence" value="ECO:0007669"/>
    <property type="project" value="Ensembl"/>
</dbReference>
<dbReference type="GO" id="GO:0010906">
    <property type="term" value="P:regulation of glucose metabolic process"/>
    <property type="evidence" value="ECO:0000315"/>
    <property type="project" value="UniProtKB"/>
</dbReference>
<dbReference type="GO" id="GO:0019216">
    <property type="term" value="P:regulation of lipid metabolic process"/>
    <property type="evidence" value="ECO:0000315"/>
    <property type="project" value="UniProtKB"/>
</dbReference>
<dbReference type="InterPro" id="IPR004254">
    <property type="entry name" value="AdipoR/HlyIII-related"/>
</dbReference>
<dbReference type="PANTHER" id="PTHR20855:SF40">
    <property type="entry name" value="ADIPONECTIN RECEPTOR PROTEIN 1"/>
    <property type="match status" value="1"/>
</dbReference>
<dbReference type="PANTHER" id="PTHR20855">
    <property type="entry name" value="ADIPOR/PROGESTIN RECEPTOR-RELATED"/>
    <property type="match status" value="1"/>
</dbReference>
<dbReference type="Pfam" id="PF03006">
    <property type="entry name" value="HlyIII"/>
    <property type="match status" value="1"/>
</dbReference>